<proteinExistence type="evidence at protein level"/>
<comment type="function">
    <text evidence="2 3 4">Component of the mitochondrial respiratory complex IV (CIV, also named cytochrome c oxidase complex), the last enzyme in the mitochondrial electron transport chain which drives oxidative phosphorylation (By similarity). The CIV complex is the component of the respiratory chain that catalyzes the reduction of oxygen to water (By similarity). Acts as an assembly factor that specifically drives the homodimerization of CIV complexes, mediating the formation of mitochondrial respiratory supercomplexes (respirasomes) containing two CIV: supercomplxes with two molecules of CIV show improved activity (By similarity). Despite being highly expressed in brown adipose tissue, not required for thermogenesis (By similarity).</text>
</comment>
<comment type="pathway">
    <text evidence="3">Energy metabolism; oxidative phosphorylation.</text>
</comment>
<comment type="subunit">
    <text evidence="1">Component of the complex IV (CIV, cytochrome c oxidase), a multisubunit enzyme composed of 14 subunits. The complex is composed of a catalytic core of 3 subunits MT-CO1, MT-CO2 and MT-CO3, encoded in the mitochondrial DNA, and 11 supernumerary subunits COX4I1 (or COX4I2), COX5A, COX5B, COX6A2 (or COX6A1), COX6B1 (or COX6B2), COX6C, COX7A1 (or COX7A2), COX7B, COX7C, COX8B and NDUFA4, which are encoded in the nuclear genome. The complex exists as a monomer or a dimer and forms supercomplexes (SCs) in the inner mitochondrial membrane with NADH-ubiquinone oxidoreductase (complex I, CI) and ubiquinol-cytochrome c oxidoreductase (cytochrome b-c1 complex, complex III, CIII), resulting in different assemblies (supercomplex SCI(1)III(2)IV(1) and megacomplex MCI(2)III(2)IV(2)).</text>
</comment>
<comment type="subcellular location">
    <subcellularLocation>
        <location evidence="1">Mitochondrion inner membrane</location>
        <topology evidence="1">Single-pass membrane protein</topology>
    </subcellularLocation>
</comment>
<comment type="similarity">
    <text evidence="5">Belongs to the cytochrome c oxidase VIIa family.</text>
</comment>
<dbReference type="EMBL" id="AJ410870">
    <property type="protein sequence ID" value="CAC85482.1"/>
    <property type="molecule type" value="Genomic_DNA"/>
</dbReference>
<dbReference type="RefSeq" id="NP_999576.1">
    <property type="nucleotide sequence ID" value="NM_214411.1"/>
</dbReference>
<dbReference type="PDB" id="8UGH">
    <property type="method" value="EM"/>
    <property type="resolution" value="2.10 A"/>
    <property type="chains" value="4J=1-80"/>
</dbReference>
<dbReference type="PDB" id="8UGI">
    <property type="method" value="EM"/>
    <property type="resolution" value="2.10 A"/>
    <property type="chains" value="4J=1-80"/>
</dbReference>
<dbReference type="PDB" id="8UGJ">
    <property type="method" value="EM"/>
    <property type="resolution" value="2.30 A"/>
    <property type="chains" value="4J/8J=1-80"/>
</dbReference>
<dbReference type="PDB" id="8UGL">
    <property type="method" value="EM"/>
    <property type="resolution" value="3.00 A"/>
    <property type="chains" value="4J=1-80"/>
</dbReference>
<dbReference type="PDB" id="8UGN">
    <property type="method" value="EM"/>
    <property type="resolution" value="2.70 A"/>
    <property type="chains" value="4J/8J=1-80"/>
</dbReference>
<dbReference type="PDB" id="8UGR">
    <property type="method" value="EM"/>
    <property type="resolution" value="6.50 A"/>
    <property type="chains" value="4J/8J=1-80"/>
</dbReference>
<dbReference type="PDBsum" id="8UGH"/>
<dbReference type="PDBsum" id="8UGI"/>
<dbReference type="PDBsum" id="8UGJ"/>
<dbReference type="PDBsum" id="8UGL"/>
<dbReference type="PDBsum" id="8UGN"/>
<dbReference type="PDBsum" id="8UGR"/>
<dbReference type="EMDB" id="EMD-42225"/>
<dbReference type="EMDB" id="EMD-42226"/>
<dbReference type="EMDB" id="EMD-42227"/>
<dbReference type="EMDB" id="EMD-42229"/>
<dbReference type="EMDB" id="EMD-42230"/>
<dbReference type="EMDB" id="EMD-42233"/>
<dbReference type="SMR" id="Q8SPJ9"/>
<dbReference type="FunCoup" id="Q8SPJ9">
    <property type="interactions" value="369"/>
</dbReference>
<dbReference type="STRING" id="9823.ENSSSCP00000046483"/>
<dbReference type="PaxDb" id="9823-ENSSSCP00000020706"/>
<dbReference type="PeptideAtlas" id="Q8SPJ9"/>
<dbReference type="Ensembl" id="ENSSSCT00000043036.3">
    <property type="protein sequence ID" value="ENSSSCP00000046483.1"/>
    <property type="gene ID" value="ENSSSCG00000037792.3"/>
</dbReference>
<dbReference type="Ensembl" id="ENSSSCT00025083459.1">
    <property type="protein sequence ID" value="ENSSSCP00025036313.1"/>
    <property type="gene ID" value="ENSSSCG00025060856.1"/>
</dbReference>
<dbReference type="Ensembl" id="ENSSSCT00030034897.1">
    <property type="protein sequence ID" value="ENSSSCP00030015925.1"/>
    <property type="gene ID" value="ENSSSCG00030024995.1"/>
</dbReference>
<dbReference type="Ensembl" id="ENSSSCT00035043443.1">
    <property type="protein sequence ID" value="ENSSSCP00035017375.1"/>
    <property type="gene ID" value="ENSSSCG00035032796.1"/>
</dbReference>
<dbReference type="Ensembl" id="ENSSSCT00040103145.1">
    <property type="protein sequence ID" value="ENSSSCP00040046676.1"/>
    <property type="gene ID" value="ENSSSCG00040074588.1"/>
</dbReference>
<dbReference type="Ensembl" id="ENSSSCT00045064954.1">
    <property type="protein sequence ID" value="ENSSSCP00045045931.1"/>
    <property type="gene ID" value="ENSSSCG00045037594.1"/>
</dbReference>
<dbReference type="Ensembl" id="ENSSSCT00050032355.1">
    <property type="protein sequence ID" value="ENSSSCP00050013489.1"/>
    <property type="gene ID" value="ENSSSCG00050024014.1"/>
</dbReference>
<dbReference type="Ensembl" id="ENSSSCT00060094006.1">
    <property type="protein sequence ID" value="ENSSSCP00060040673.1"/>
    <property type="gene ID" value="ENSSSCG00060068844.1"/>
</dbReference>
<dbReference type="Ensembl" id="ENSSSCT00065095656.1">
    <property type="protein sequence ID" value="ENSSSCP00065041864.1"/>
    <property type="gene ID" value="ENSSSCG00065069658.1"/>
</dbReference>
<dbReference type="Ensembl" id="ENSSSCT00070016156.1">
    <property type="protein sequence ID" value="ENSSSCP00070013372.1"/>
    <property type="gene ID" value="ENSSSCG00070008365.1"/>
</dbReference>
<dbReference type="GeneID" id="399685"/>
<dbReference type="KEGG" id="ssc:399685"/>
<dbReference type="CTD" id="1346"/>
<dbReference type="VGNC" id="VGNC:86928">
    <property type="gene designation" value="COX7A1"/>
</dbReference>
<dbReference type="eggNOG" id="ENOG502SBK9">
    <property type="taxonomic scope" value="Eukaryota"/>
</dbReference>
<dbReference type="GeneTree" id="ENSGT00940000162305"/>
<dbReference type="HOGENOM" id="CLU_173437_1_0_1"/>
<dbReference type="InParanoid" id="Q8SPJ9"/>
<dbReference type="OMA" id="VYCLGWA"/>
<dbReference type="OrthoDB" id="5966508at2759"/>
<dbReference type="TreeFam" id="TF105067"/>
<dbReference type="Reactome" id="R-SSC-5628897">
    <property type="pathway name" value="TP53 Regulates Metabolic Genes"/>
</dbReference>
<dbReference type="Reactome" id="R-SSC-611105">
    <property type="pathway name" value="Respiratory electron transport"/>
</dbReference>
<dbReference type="Reactome" id="R-SSC-9707564">
    <property type="pathway name" value="Cytoprotection by HMOX1"/>
</dbReference>
<dbReference type="Reactome" id="R-SSC-9864848">
    <property type="pathway name" value="Complex IV assembly"/>
</dbReference>
<dbReference type="UniPathway" id="UPA00705"/>
<dbReference type="Proteomes" id="UP000008227">
    <property type="component" value="Chromosome 6"/>
</dbReference>
<dbReference type="Proteomes" id="UP000314985">
    <property type="component" value="Chromosome 6"/>
</dbReference>
<dbReference type="Proteomes" id="UP000694570">
    <property type="component" value="Unplaced"/>
</dbReference>
<dbReference type="Proteomes" id="UP000694571">
    <property type="component" value="Unplaced"/>
</dbReference>
<dbReference type="Proteomes" id="UP000694720">
    <property type="component" value="Unplaced"/>
</dbReference>
<dbReference type="Proteomes" id="UP000694722">
    <property type="component" value="Unplaced"/>
</dbReference>
<dbReference type="Proteomes" id="UP000694723">
    <property type="component" value="Unplaced"/>
</dbReference>
<dbReference type="Proteomes" id="UP000694724">
    <property type="component" value="Unplaced"/>
</dbReference>
<dbReference type="Proteomes" id="UP000694725">
    <property type="component" value="Unplaced"/>
</dbReference>
<dbReference type="Proteomes" id="UP000694726">
    <property type="component" value="Unplaced"/>
</dbReference>
<dbReference type="Proteomes" id="UP000694727">
    <property type="component" value="Unplaced"/>
</dbReference>
<dbReference type="Proteomes" id="UP000694728">
    <property type="component" value="Unplaced"/>
</dbReference>
<dbReference type="Bgee" id="ENSSSCG00000037792">
    <property type="expression patterns" value="Expressed in heart left ventricle and 44 other cell types or tissues"/>
</dbReference>
<dbReference type="GO" id="GO:0005743">
    <property type="term" value="C:mitochondrial inner membrane"/>
    <property type="evidence" value="ECO:0007669"/>
    <property type="project" value="UniProtKB-SubCell"/>
</dbReference>
<dbReference type="GO" id="GO:0005739">
    <property type="term" value="C:mitochondrion"/>
    <property type="evidence" value="ECO:0000250"/>
    <property type="project" value="AgBase"/>
</dbReference>
<dbReference type="GO" id="GO:0098803">
    <property type="term" value="C:respiratory chain complex"/>
    <property type="evidence" value="ECO:0000318"/>
    <property type="project" value="GO_Central"/>
</dbReference>
<dbReference type="GO" id="GO:0045277">
    <property type="term" value="C:respiratory chain complex IV"/>
    <property type="evidence" value="ECO:0007669"/>
    <property type="project" value="Ensembl"/>
</dbReference>
<dbReference type="GO" id="GO:0004129">
    <property type="term" value="F:cytochrome-c oxidase activity"/>
    <property type="evidence" value="ECO:0007669"/>
    <property type="project" value="Ensembl"/>
</dbReference>
<dbReference type="GO" id="GO:0006123">
    <property type="term" value="P:mitochondrial electron transport, cytochrome c to oxygen"/>
    <property type="evidence" value="ECO:0007669"/>
    <property type="project" value="InterPro"/>
</dbReference>
<dbReference type="GO" id="GO:0097250">
    <property type="term" value="P:mitochondrial respirasome assembly"/>
    <property type="evidence" value="ECO:0000250"/>
    <property type="project" value="UniProtKB"/>
</dbReference>
<dbReference type="CDD" id="cd00928">
    <property type="entry name" value="Cyt_c_Oxidase_VIIa"/>
    <property type="match status" value="1"/>
</dbReference>
<dbReference type="FunFam" id="4.10.91.10:FF:000001">
    <property type="entry name" value="Cytochrome c oxidase subunit 7A1, mitochondrial"/>
    <property type="match status" value="1"/>
</dbReference>
<dbReference type="Gene3D" id="4.10.91.10">
    <property type="entry name" value="Cytochrome c oxidase, subunit VIIa"/>
    <property type="match status" value="1"/>
</dbReference>
<dbReference type="InterPro" id="IPR039297">
    <property type="entry name" value="COX7a"/>
</dbReference>
<dbReference type="InterPro" id="IPR036539">
    <property type="entry name" value="Cyt_c_oxidase_su7a_sf"/>
</dbReference>
<dbReference type="InterPro" id="IPR003177">
    <property type="entry name" value="Cytc_oxidase_su7a_met"/>
</dbReference>
<dbReference type="PANTHER" id="PTHR10510">
    <property type="entry name" value="CYTOCHROME C OXIDASE POLYPEPTIDE 7A"/>
    <property type="match status" value="1"/>
</dbReference>
<dbReference type="PANTHER" id="PTHR10510:SF5">
    <property type="entry name" value="CYTOCHROME C OXIDASE SUBUNIT 7A1, MITOCHONDRIAL"/>
    <property type="match status" value="1"/>
</dbReference>
<dbReference type="Pfam" id="PF02238">
    <property type="entry name" value="COX7a"/>
    <property type="match status" value="1"/>
</dbReference>
<dbReference type="SUPFAM" id="SSF81419">
    <property type="entry name" value="Mitochondrial cytochrome c oxidase subunit VIIa"/>
    <property type="match status" value="1"/>
</dbReference>
<accession>Q8SPJ9</accession>
<reference key="1">
    <citation type="journal article" date="2001" name="Cytogenet. Cell Genet.">
        <title>Molecular characterization and chromosome assignment of the porcine gene COX7A1 coding for the muscle specific cytochrome c oxidase subunit VIIa-M.</title>
        <authorList>
            <person name="Droegemueller C."/>
            <person name="Kuiper H."/>
            <person name="Voss-Nemitz R."/>
            <person name="Brenig B."/>
            <person name="Distl O."/>
            <person name="Leeb T."/>
        </authorList>
    </citation>
    <scope>NUCLEOTIDE SEQUENCE [GENOMIC DNA]</scope>
</reference>
<sequence length="80" mass="9014">MRALRVSQALVRSFSSTARNRLENRVAEKQKIFQADNDLPVHLKGGATDNILYRVTMTLCLGGTVYSLYCLGWASFPHKK</sequence>
<protein>
    <recommendedName>
        <fullName>Cytochrome c oxidase subunit 7A1, mitochondrial</fullName>
    </recommendedName>
    <alternativeName>
        <fullName>Cytochrome c oxidase subunit VIIa-heart</fullName>
        <shortName>Cytochrome c oxidase subunit VIIa-H</shortName>
    </alternativeName>
</protein>
<name>CX7A1_PIG</name>
<keyword id="KW-0002">3D-structure</keyword>
<keyword id="KW-0472">Membrane</keyword>
<keyword id="KW-0496">Mitochondrion</keyword>
<keyword id="KW-0999">Mitochondrion inner membrane</keyword>
<keyword id="KW-0560">Oxidoreductase</keyword>
<keyword id="KW-1185">Reference proteome</keyword>
<keyword id="KW-0809">Transit peptide</keyword>
<keyword id="KW-0812">Transmembrane</keyword>
<keyword id="KW-1133">Transmembrane helix</keyword>
<feature type="transit peptide" description="Mitochondrion" evidence="1">
    <location>
        <begin position="1"/>
        <end position="21"/>
    </location>
</feature>
<feature type="chain" id="PRO_0000006152" description="Cytochrome c oxidase subunit 7A1, mitochondrial">
    <location>
        <begin position="22"/>
        <end position="80"/>
    </location>
</feature>
<feature type="topological domain" description="Mitochondrial matrix" evidence="1">
    <location>
        <begin position="22"/>
        <end position="46"/>
    </location>
</feature>
<feature type="transmembrane region" description="Helical" evidence="1">
    <location>
        <begin position="47"/>
        <end position="75"/>
    </location>
</feature>
<feature type="topological domain" description="Mitochondrial intermembrane" evidence="1">
    <location>
        <begin position="76"/>
        <end position="80"/>
    </location>
</feature>
<evidence type="ECO:0000250" key="1">
    <source>
        <dbReference type="UniProtKB" id="P07470"/>
    </source>
</evidence>
<evidence type="ECO:0000250" key="2">
    <source>
        <dbReference type="UniProtKB" id="P10174"/>
    </source>
</evidence>
<evidence type="ECO:0000250" key="3">
    <source>
        <dbReference type="UniProtKB" id="P56392"/>
    </source>
</evidence>
<evidence type="ECO:0000250" key="4">
    <source>
        <dbReference type="UniProtKB" id="Q08CE7"/>
    </source>
</evidence>
<evidence type="ECO:0000305" key="5"/>
<organism>
    <name type="scientific">Sus scrofa</name>
    <name type="common">Pig</name>
    <dbReference type="NCBI Taxonomy" id="9823"/>
    <lineage>
        <taxon>Eukaryota</taxon>
        <taxon>Metazoa</taxon>
        <taxon>Chordata</taxon>
        <taxon>Craniata</taxon>
        <taxon>Vertebrata</taxon>
        <taxon>Euteleostomi</taxon>
        <taxon>Mammalia</taxon>
        <taxon>Eutheria</taxon>
        <taxon>Laurasiatheria</taxon>
        <taxon>Artiodactyla</taxon>
        <taxon>Suina</taxon>
        <taxon>Suidae</taxon>
        <taxon>Sus</taxon>
    </lineage>
</organism>
<gene>
    <name type="primary">COX7A1</name>
</gene>